<reference key="1">
    <citation type="journal article" date="2008" name="Genome Res.">
        <title>Insights from the complete genome sequence of Mycobacterium marinum on the evolution of Mycobacterium tuberculosis.</title>
        <authorList>
            <person name="Stinear T.P."/>
            <person name="Seemann T."/>
            <person name="Harrison P.F."/>
            <person name="Jenkin G.A."/>
            <person name="Davies J.K."/>
            <person name="Johnson P.D."/>
            <person name="Abdellah Z."/>
            <person name="Arrowsmith C."/>
            <person name="Chillingworth T."/>
            <person name="Churcher C."/>
            <person name="Clarke K."/>
            <person name="Cronin A."/>
            <person name="Davis P."/>
            <person name="Goodhead I."/>
            <person name="Holroyd N."/>
            <person name="Jagels K."/>
            <person name="Lord A."/>
            <person name="Moule S."/>
            <person name="Mungall K."/>
            <person name="Norbertczak H."/>
            <person name="Quail M.A."/>
            <person name="Rabbinowitsch E."/>
            <person name="Walker D."/>
            <person name="White B."/>
            <person name="Whitehead S."/>
            <person name="Small P.L."/>
            <person name="Brosch R."/>
            <person name="Ramakrishnan L."/>
            <person name="Fischbach M.A."/>
            <person name="Parkhill J."/>
            <person name="Cole S.T."/>
        </authorList>
    </citation>
    <scope>NUCLEOTIDE SEQUENCE [LARGE SCALE GENOMIC DNA]</scope>
    <source>
        <strain>ATCC BAA-535 / M</strain>
    </source>
</reference>
<accession>B2HSG5</accession>
<gene>
    <name evidence="1" type="primary">rpmG2</name>
    <name type="ordered locus">MMAR_0967</name>
</gene>
<organism>
    <name type="scientific">Mycobacterium marinum (strain ATCC BAA-535 / M)</name>
    <dbReference type="NCBI Taxonomy" id="216594"/>
    <lineage>
        <taxon>Bacteria</taxon>
        <taxon>Bacillati</taxon>
        <taxon>Actinomycetota</taxon>
        <taxon>Actinomycetes</taxon>
        <taxon>Mycobacteriales</taxon>
        <taxon>Mycobacteriaceae</taxon>
        <taxon>Mycobacterium</taxon>
        <taxon>Mycobacterium ulcerans group</taxon>
    </lineage>
</organism>
<comment type="similarity">
    <text evidence="1">Belongs to the bacterial ribosomal protein bL33 family.</text>
</comment>
<protein>
    <recommendedName>
        <fullName evidence="1">Large ribosomal subunit protein bL33B</fullName>
    </recommendedName>
    <alternativeName>
        <fullName evidence="1">50S ribosomal protein L33 2</fullName>
    </alternativeName>
</protein>
<sequence length="55" mass="6513">MASSTDVRPKITLACEVCKHRNYITKKNRRNDPDRLELKKFCRNCGSHQAHRETR</sequence>
<evidence type="ECO:0000255" key="1">
    <source>
        <dbReference type="HAMAP-Rule" id="MF_00294"/>
    </source>
</evidence>
<dbReference type="EMBL" id="CP000854">
    <property type="protein sequence ID" value="ACC39423.1"/>
    <property type="molecule type" value="Genomic_DNA"/>
</dbReference>
<dbReference type="RefSeq" id="WP_011738995.1">
    <property type="nucleotide sequence ID" value="NC_010612.1"/>
</dbReference>
<dbReference type="SMR" id="B2HSG5"/>
<dbReference type="STRING" id="216594.MMAR_0967"/>
<dbReference type="GeneID" id="34342740"/>
<dbReference type="KEGG" id="mmi:MMAR_0967"/>
<dbReference type="eggNOG" id="COG0267">
    <property type="taxonomic scope" value="Bacteria"/>
</dbReference>
<dbReference type="HOGENOM" id="CLU_190949_0_2_11"/>
<dbReference type="OrthoDB" id="21586at2"/>
<dbReference type="Proteomes" id="UP000001190">
    <property type="component" value="Chromosome"/>
</dbReference>
<dbReference type="GO" id="GO:0005737">
    <property type="term" value="C:cytoplasm"/>
    <property type="evidence" value="ECO:0007669"/>
    <property type="project" value="UniProtKB-ARBA"/>
</dbReference>
<dbReference type="GO" id="GO:1990904">
    <property type="term" value="C:ribonucleoprotein complex"/>
    <property type="evidence" value="ECO:0007669"/>
    <property type="project" value="UniProtKB-KW"/>
</dbReference>
<dbReference type="GO" id="GO:0005840">
    <property type="term" value="C:ribosome"/>
    <property type="evidence" value="ECO:0007669"/>
    <property type="project" value="UniProtKB-KW"/>
</dbReference>
<dbReference type="GO" id="GO:0003735">
    <property type="term" value="F:structural constituent of ribosome"/>
    <property type="evidence" value="ECO:0007669"/>
    <property type="project" value="InterPro"/>
</dbReference>
<dbReference type="GO" id="GO:0006412">
    <property type="term" value="P:translation"/>
    <property type="evidence" value="ECO:0007669"/>
    <property type="project" value="UniProtKB-UniRule"/>
</dbReference>
<dbReference type="Gene3D" id="2.20.28.120">
    <property type="entry name" value="Ribosomal protein L33"/>
    <property type="match status" value="1"/>
</dbReference>
<dbReference type="HAMAP" id="MF_00294">
    <property type="entry name" value="Ribosomal_bL33"/>
    <property type="match status" value="1"/>
</dbReference>
<dbReference type="InterPro" id="IPR001705">
    <property type="entry name" value="Ribosomal_bL33"/>
</dbReference>
<dbReference type="InterPro" id="IPR018264">
    <property type="entry name" value="Ribosomal_bL33_CS"/>
</dbReference>
<dbReference type="InterPro" id="IPR038584">
    <property type="entry name" value="Ribosomal_bL33_sf"/>
</dbReference>
<dbReference type="InterPro" id="IPR011332">
    <property type="entry name" value="Ribosomal_zn-bd"/>
</dbReference>
<dbReference type="NCBIfam" id="NF001764">
    <property type="entry name" value="PRK00504.1"/>
    <property type="match status" value="1"/>
</dbReference>
<dbReference type="NCBIfam" id="NF001860">
    <property type="entry name" value="PRK00595.1"/>
    <property type="match status" value="1"/>
</dbReference>
<dbReference type="NCBIfam" id="TIGR01023">
    <property type="entry name" value="rpmG_bact"/>
    <property type="match status" value="1"/>
</dbReference>
<dbReference type="PANTHER" id="PTHR43168">
    <property type="entry name" value="50S RIBOSOMAL PROTEIN L33, CHLOROPLASTIC"/>
    <property type="match status" value="1"/>
</dbReference>
<dbReference type="PANTHER" id="PTHR43168:SF2">
    <property type="entry name" value="LARGE RIBOSOMAL SUBUNIT PROTEIN BL33C"/>
    <property type="match status" value="1"/>
</dbReference>
<dbReference type="Pfam" id="PF00471">
    <property type="entry name" value="Ribosomal_L33"/>
    <property type="match status" value="1"/>
</dbReference>
<dbReference type="SUPFAM" id="SSF57829">
    <property type="entry name" value="Zn-binding ribosomal proteins"/>
    <property type="match status" value="1"/>
</dbReference>
<dbReference type="PROSITE" id="PS00582">
    <property type="entry name" value="RIBOSOMAL_L33"/>
    <property type="match status" value="1"/>
</dbReference>
<proteinExistence type="inferred from homology"/>
<name>RL332_MYCMM</name>
<keyword id="KW-1185">Reference proteome</keyword>
<keyword id="KW-0687">Ribonucleoprotein</keyword>
<keyword id="KW-0689">Ribosomal protein</keyword>
<feature type="chain" id="PRO_0000356552" description="Large ribosomal subunit protein bL33B">
    <location>
        <begin position="1"/>
        <end position="55"/>
    </location>
</feature>